<evidence type="ECO:0000255" key="1">
    <source>
        <dbReference type="HAMAP-Rule" id="MF_00074"/>
    </source>
</evidence>
<gene>
    <name evidence="1" type="primary">rsmG</name>
    <name type="ordered locus">LA_4348</name>
</gene>
<reference key="1">
    <citation type="journal article" date="2003" name="Nature">
        <title>Unique physiological and pathogenic features of Leptospira interrogans revealed by whole-genome sequencing.</title>
        <authorList>
            <person name="Ren S.-X."/>
            <person name="Fu G."/>
            <person name="Jiang X.-G."/>
            <person name="Zeng R."/>
            <person name="Miao Y.-G."/>
            <person name="Xu H."/>
            <person name="Zhang Y.-X."/>
            <person name="Xiong H."/>
            <person name="Lu G."/>
            <person name="Lu L.-F."/>
            <person name="Jiang H.-Q."/>
            <person name="Jia J."/>
            <person name="Tu Y.-F."/>
            <person name="Jiang J.-X."/>
            <person name="Gu W.-Y."/>
            <person name="Zhang Y.-Q."/>
            <person name="Cai Z."/>
            <person name="Sheng H.-H."/>
            <person name="Yin H.-F."/>
            <person name="Zhang Y."/>
            <person name="Zhu G.-F."/>
            <person name="Wan M."/>
            <person name="Huang H.-L."/>
            <person name="Qian Z."/>
            <person name="Wang S.-Y."/>
            <person name="Ma W."/>
            <person name="Yao Z.-J."/>
            <person name="Shen Y."/>
            <person name="Qiang B.-Q."/>
            <person name="Xia Q.-C."/>
            <person name="Guo X.-K."/>
            <person name="Danchin A."/>
            <person name="Saint Girons I."/>
            <person name="Somerville R.L."/>
            <person name="Wen Y.-M."/>
            <person name="Shi M.-H."/>
            <person name="Chen Z."/>
            <person name="Xu J.-G."/>
            <person name="Zhao G.-P."/>
        </authorList>
    </citation>
    <scope>NUCLEOTIDE SEQUENCE [LARGE SCALE GENOMIC DNA]</scope>
    <source>
        <strain>56601</strain>
    </source>
</reference>
<sequence>MQDPEQFSIESILQRLKERFPTEADEISSFFDWDLVHKFTVFLKEKNEAGGFFSKRDSEEILDRHVLESIYHVYRITKKIGSWKGTQLGDAGTGPGIPGFFFRCLKEHPIVVLIDSQKRKLSHTENFVRSNQIDGVKFQFIRAEESKLSLNYVTSRGFIPYPYSIEAICNLLKINGTYVPFLGKHDMDTNLEKKVLSYSGFKLEFSEDLVPLEFLGMRHIKFLKKVSSPRHGYPRAWKEISKESKGANGKDRID</sequence>
<accession>Q8EY69</accession>
<keyword id="KW-0963">Cytoplasm</keyword>
<keyword id="KW-0489">Methyltransferase</keyword>
<keyword id="KW-1185">Reference proteome</keyword>
<keyword id="KW-0698">rRNA processing</keyword>
<keyword id="KW-0949">S-adenosyl-L-methionine</keyword>
<keyword id="KW-0808">Transferase</keyword>
<protein>
    <recommendedName>
        <fullName evidence="1">Ribosomal RNA small subunit methyltransferase G</fullName>
        <ecNumber evidence="1">2.1.1.-</ecNumber>
    </recommendedName>
    <alternativeName>
        <fullName evidence="1">16S rRNA 7-methylguanosine methyltransferase</fullName>
        <shortName evidence="1">16S rRNA m7G methyltransferase</shortName>
    </alternativeName>
</protein>
<organism>
    <name type="scientific">Leptospira interrogans serogroup Icterohaemorrhagiae serovar Lai (strain 56601)</name>
    <dbReference type="NCBI Taxonomy" id="189518"/>
    <lineage>
        <taxon>Bacteria</taxon>
        <taxon>Pseudomonadati</taxon>
        <taxon>Spirochaetota</taxon>
        <taxon>Spirochaetia</taxon>
        <taxon>Leptospirales</taxon>
        <taxon>Leptospiraceae</taxon>
        <taxon>Leptospira</taxon>
    </lineage>
</organism>
<feature type="chain" id="PRO_0000342922" description="Ribosomal RNA small subunit methyltransferase G">
    <location>
        <begin position="1"/>
        <end position="254"/>
    </location>
</feature>
<feature type="binding site" evidence="1">
    <location>
        <position position="92"/>
    </location>
    <ligand>
        <name>S-adenosyl-L-methionine</name>
        <dbReference type="ChEBI" id="CHEBI:59789"/>
    </ligand>
</feature>
<feature type="binding site" evidence="1">
    <location>
        <begin position="143"/>
        <end position="144"/>
    </location>
    <ligand>
        <name>S-adenosyl-L-methionine</name>
        <dbReference type="ChEBI" id="CHEBI:59789"/>
    </ligand>
</feature>
<feature type="binding site" evidence="1">
    <location>
        <position position="156"/>
    </location>
    <ligand>
        <name>S-adenosyl-L-methionine</name>
        <dbReference type="ChEBI" id="CHEBI:59789"/>
    </ligand>
</feature>
<name>RSMG_LEPIN</name>
<dbReference type="EC" id="2.1.1.-" evidence="1"/>
<dbReference type="EMBL" id="AE010300">
    <property type="protein sequence ID" value="AAN51546.1"/>
    <property type="molecule type" value="Genomic_DNA"/>
</dbReference>
<dbReference type="RefSeq" id="NP_714528.1">
    <property type="nucleotide sequence ID" value="NC_004342.2"/>
</dbReference>
<dbReference type="RefSeq" id="WP_001153932.1">
    <property type="nucleotide sequence ID" value="NC_004342.2"/>
</dbReference>
<dbReference type="SMR" id="Q8EY69"/>
<dbReference type="STRING" id="189518.LA_4348"/>
<dbReference type="PaxDb" id="189518-LA_4348"/>
<dbReference type="EnsemblBacteria" id="AAN51546">
    <property type="protein sequence ID" value="AAN51546"/>
    <property type="gene ID" value="LA_4348"/>
</dbReference>
<dbReference type="KEGG" id="lil:LA_4348"/>
<dbReference type="PATRIC" id="fig|189518.3.peg.4316"/>
<dbReference type="HOGENOM" id="CLU_1093258_0_0_12"/>
<dbReference type="InParanoid" id="Q8EY69"/>
<dbReference type="OrthoDB" id="340750at2"/>
<dbReference type="Proteomes" id="UP000001408">
    <property type="component" value="Chromosome I"/>
</dbReference>
<dbReference type="GO" id="GO:0005829">
    <property type="term" value="C:cytosol"/>
    <property type="evidence" value="ECO:0000318"/>
    <property type="project" value="GO_Central"/>
</dbReference>
<dbReference type="GO" id="GO:0070043">
    <property type="term" value="F:rRNA (guanine-N7-)-methyltransferase activity"/>
    <property type="evidence" value="ECO:0000318"/>
    <property type="project" value="GO_Central"/>
</dbReference>
<dbReference type="Gene3D" id="3.40.50.150">
    <property type="entry name" value="Vaccinia Virus protein VP39"/>
    <property type="match status" value="1"/>
</dbReference>
<dbReference type="HAMAP" id="MF_00074">
    <property type="entry name" value="16SrRNA_methyltr_G"/>
    <property type="match status" value="1"/>
</dbReference>
<dbReference type="InterPro" id="IPR003682">
    <property type="entry name" value="rRNA_ssu_MeTfrase_G"/>
</dbReference>
<dbReference type="InterPro" id="IPR029063">
    <property type="entry name" value="SAM-dependent_MTases_sf"/>
</dbReference>
<dbReference type="PANTHER" id="PTHR31760">
    <property type="entry name" value="S-ADENOSYL-L-METHIONINE-DEPENDENT METHYLTRANSFERASES SUPERFAMILY PROTEIN"/>
    <property type="match status" value="1"/>
</dbReference>
<dbReference type="PANTHER" id="PTHR31760:SF0">
    <property type="entry name" value="S-ADENOSYL-L-METHIONINE-DEPENDENT METHYLTRANSFERASES SUPERFAMILY PROTEIN"/>
    <property type="match status" value="1"/>
</dbReference>
<dbReference type="Pfam" id="PF02527">
    <property type="entry name" value="GidB"/>
    <property type="match status" value="1"/>
</dbReference>
<dbReference type="PIRSF" id="PIRSF003078">
    <property type="entry name" value="GidB"/>
    <property type="match status" value="1"/>
</dbReference>
<dbReference type="SUPFAM" id="SSF53335">
    <property type="entry name" value="S-adenosyl-L-methionine-dependent methyltransferases"/>
    <property type="match status" value="1"/>
</dbReference>
<comment type="function">
    <text evidence="1">Specifically methylates the N7 position of a guanine in 16S rRNA.</text>
</comment>
<comment type="subcellular location">
    <subcellularLocation>
        <location evidence="1">Cytoplasm</location>
    </subcellularLocation>
</comment>
<comment type="similarity">
    <text evidence="1">Belongs to the methyltransferase superfamily. RNA methyltransferase RsmG family.</text>
</comment>
<proteinExistence type="inferred from homology"/>